<proteinExistence type="inferred from homology"/>
<gene>
    <name type="primary">TMEM50B</name>
</gene>
<protein>
    <recommendedName>
        <fullName>Transmembrane protein 50B</fullName>
    </recommendedName>
</protein>
<accession>A9CAZ8</accession>
<dbReference type="EMBL" id="DP000484">
    <property type="protein sequence ID" value="ABW97194.1"/>
    <property type="molecule type" value="Genomic_DNA"/>
</dbReference>
<dbReference type="RefSeq" id="NP_001162256.1">
    <property type="nucleotide sequence ID" value="NM_001168785.1"/>
</dbReference>
<dbReference type="RefSeq" id="XP_021790782.1">
    <property type="nucleotide sequence ID" value="XM_021935090.2"/>
</dbReference>
<dbReference type="RefSeq" id="XP_021790783.1">
    <property type="nucleotide sequence ID" value="XM_021935091.2"/>
</dbReference>
<dbReference type="STRING" id="9555.ENSPANP00000041424"/>
<dbReference type="Ensembl" id="ENSPANT00000018361.3">
    <property type="protein sequence ID" value="ENSPANP00000016716.3"/>
    <property type="gene ID" value="ENSPANG00000018699.3"/>
</dbReference>
<dbReference type="GeneID" id="100137247"/>
<dbReference type="KEGG" id="panu:100137247"/>
<dbReference type="CTD" id="757"/>
<dbReference type="eggNOG" id="KOG3393">
    <property type="taxonomic scope" value="Eukaryota"/>
</dbReference>
<dbReference type="GeneTree" id="ENSGT00940000155131"/>
<dbReference type="OMA" id="LWIMFAD"/>
<dbReference type="Proteomes" id="UP000028761">
    <property type="component" value="Chromosome 4"/>
</dbReference>
<dbReference type="Bgee" id="ENSPANG00000018699">
    <property type="expression patterns" value="Expressed in thyroid gland and 66 other cell types or tissues"/>
</dbReference>
<dbReference type="ExpressionAtlas" id="A9CAZ8">
    <property type="expression patterns" value="baseline"/>
</dbReference>
<dbReference type="GO" id="GO:0005789">
    <property type="term" value="C:endoplasmic reticulum membrane"/>
    <property type="evidence" value="ECO:0007669"/>
    <property type="project" value="UniProtKB-SubCell"/>
</dbReference>
<dbReference type="GO" id="GO:0000139">
    <property type="term" value="C:Golgi membrane"/>
    <property type="evidence" value="ECO:0007669"/>
    <property type="project" value="UniProtKB-SubCell"/>
</dbReference>
<dbReference type="InterPro" id="IPR007919">
    <property type="entry name" value="UPF0220"/>
</dbReference>
<dbReference type="PANTHER" id="PTHR13180">
    <property type="entry name" value="SMALL MEMBRANE PROTEIN-RELATED"/>
    <property type="match status" value="1"/>
</dbReference>
<dbReference type="Pfam" id="PF05255">
    <property type="entry name" value="UPF0220"/>
    <property type="match status" value="1"/>
</dbReference>
<name>TM50B_PAPAN</name>
<keyword id="KW-0007">Acetylation</keyword>
<keyword id="KW-0256">Endoplasmic reticulum</keyword>
<keyword id="KW-0333">Golgi apparatus</keyword>
<keyword id="KW-0472">Membrane</keyword>
<keyword id="KW-1185">Reference proteome</keyword>
<keyword id="KW-0812">Transmembrane</keyword>
<keyword id="KW-1133">Transmembrane helix</keyword>
<organism>
    <name type="scientific">Papio anubis</name>
    <name type="common">Olive baboon</name>
    <dbReference type="NCBI Taxonomy" id="9555"/>
    <lineage>
        <taxon>Eukaryota</taxon>
        <taxon>Metazoa</taxon>
        <taxon>Chordata</taxon>
        <taxon>Craniata</taxon>
        <taxon>Vertebrata</taxon>
        <taxon>Euteleostomi</taxon>
        <taxon>Mammalia</taxon>
        <taxon>Eutheria</taxon>
        <taxon>Euarchontoglires</taxon>
        <taxon>Primates</taxon>
        <taxon>Haplorrhini</taxon>
        <taxon>Catarrhini</taxon>
        <taxon>Cercopithecidae</taxon>
        <taxon>Cercopithecinae</taxon>
        <taxon>Papio</taxon>
    </lineage>
</organism>
<feature type="initiator methionine" description="Removed" evidence="1">
    <location>
        <position position="1"/>
    </location>
</feature>
<feature type="chain" id="PRO_0000328500" description="Transmembrane protein 50B">
    <location>
        <begin position="2"/>
        <end position="158"/>
    </location>
</feature>
<feature type="transmembrane region" description="Helical" evidence="3">
    <location>
        <begin position="28"/>
        <end position="48"/>
    </location>
</feature>
<feature type="transmembrane region" description="Helical" evidence="3">
    <location>
        <begin position="56"/>
        <end position="76"/>
    </location>
</feature>
<feature type="transmembrane region" description="Helical" evidence="3">
    <location>
        <begin position="98"/>
        <end position="118"/>
    </location>
</feature>
<feature type="transmembrane region" description="Helical" evidence="3">
    <location>
        <begin position="128"/>
        <end position="148"/>
    </location>
</feature>
<feature type="modified residue" description="N-acetylalanine" evidence="1">
    <location>
        <position position="2"/>
    </location>
</feature>
<evidence type="ECO:0000250" key="1">
    <source>
        <dbReference type="UniProtKB" id="P56557"/>
    </source>
</evidence>
<evidence type="ECO:0000250" key="2">
    <source>
        <dbReference type="UniProtKB" id="Q9D1X9"/>
    </source>
</evidence>
<evidence type="ECO:0000255" key="3"/>
<evidence type="ECO:0000305" key="4"/>
<reference key="1">
    <citation type="submission" date="2007-11" db="EMBL/GenBank/DDBJ databases">
        <title>NISC comparative sequencing initiative.</title>
        <authorList>
            <person name="Antonellis A."/>
            <person name="Benjamin B."/>
            <person name="Blakesley R.W."/>
            <person name="Bouffard G.G."/>
            <person name="Brinkley C."/>
            <person name="Brooks S."/>
            <person name="Chu G."/>
            <person name="Chub I."/>
            <person name="Coleman H."/>
            <person name="Fuksenko T."/>
            <person name="Gestole M."/>
            <person name="Gregory M."/>
            <person name="Guan X."/>
            <person name="Gupta J."/>
            <person name="Gurson N."/>
            <person name="Han E."/>
            <person name="Han J."/>
            <person name="Hansen N."/>
            <person name="Hargrove A."/>
            <person name="Hines-Harris K."/>
            <person name="Ho S.-L."/>
            <person name="Hu P."/>
            <person name="Hunter G."/>
            <person name="Hurle B."/>
            <person name="Idol J.R."/>
            <person name="Johnson T."/>
            <person name="Knight E."/>
            <person name="Kwong P."/>
            <person name="Lee-Lin S.-Q."/>
            <person name="Legaspi R."/>
            <person name="Madden M."/>
            <person name="Maduro Q.L."/>
            <person name="Maduro V.B."/>
            <person name="Margulies E.H."/>
            <person name="Masiello C."/>
            <person name="Maskeri B."/>
            <person name="McDowell J."/>
            <person name="Merkulov G."/>
            <person name="Montemayor C."/>
            <person name="Mullikin J.C."/>
            <person name="Park M."/>
            <person name="Prasad A."/>
            <person name="Ramsahoye C."/>
            <person name="Reddix-Dugue N."/>
            <person name="Riebow N."/>
            <person name="Schandler K."/>
            <person name="Schueler M.G."/>
            <person name="Sison C."/>
            <person name="Smith L."/>
            <person name="Stantripop S."/>
            <person name="Thomas J.W."/>
            <person name="Thomas P.J."/>
            <person name="Tsipouri V."/>
            <person name="Young A."/>
            <person name="Green E.D."/>
        </authorList>
    </citation>
    <scope>NUCLEOTIDE SEQUENCE [LARGE SCALE GENOMIC DNA]</scope>
</reference>
<comment type="subunit">
    <text evidence="2">May form homotrimers or homodimers.</text>
</comment>
<comment type="subcellular location">
    <subcellularLocation>
        <location evidence="2">Endoplasmic reticulum membrane</location>
        <topology evidence="3">Multi-pass membrane protein</topology>
    </subcellularLocation>
    <subcellularLocation>
        <location evidence="2">Golgi apparatus membrane</location>
        <topology evidence="3">Multi-pass membrane protein</topology>
    </subcellularLocation>
</comment>
<comment type="similarity">
    <text evidence="4">Belongs to the UPF0220 family.</text>
</comment>
<sequence>MAGFLDNFRWPECECIDWSERRNAVASVVAGILFFTGWWIMIDAAVVYPKPEQLNHAFHTCGVFSTLAFFMINAVSNAQVRGDSYESGCLGRTGARVWLFIGFMLMFGSLIASMWILFGAYVTQNTDVYPGLAVFFQNALIFFSTLIYKFGRTEELWT</sequence>